<dbReference type="EC" id="2.5.1.3" evidence="1"/>
<dbReference type="EMBL" id="CP001393">
    <property type="protein sequence ID" value="ACM59508.1"/>
    <property type="molecule type" value="Genomic_DNA"/>
</dbReference>
<dbReference type="SMR" id="B9MN52"/>
<dbReference type="STRING" id="521460.Athe_0372"/>
<dbReference type="KEGG" id="ate:Athe_0372"/>
<dbReference type="eggNOG" id="COG0352">
    <property type="taxonomic scope" value="Bacteria"/>
</dbReference>
<dbReference type="HOGENOM" id="CLU_018272_3_2_9"/>
<dbReference type="UniPathway" id="UPA00060">
    <property type="reaction ID" value="UER00141"/>
</dbReference>
<dbReference type="Proteomes" id="UP000007723">
    <property type="component" value="Chromosome"/>
</dbReference>
<dbReference type="GO" id="GO:0005737">
    <property type="term" value="C:cytoplasm"/>
    <property type="evidence" value="ECO:0007669"/>
    <property type="project" value="TreeGrafter"/>
</dbReference>
<dbReference type="GO" id="GO:0000287">
    <property type="term" value="F:magnesium ion binding"/>
    <property type="evidence" value="ECO:0007669"/>
    <property type="project" value="UniProtKB-UniRule"/>
</dbReference>
<dbReference type="GO" id="GO:0004789">
    <property type="term" value="F:thiamine-phosphate diphosphorylase activity"/>
    <property type="evidence" value="ECO:0007669"/>
    <property type="project" value="UniProtKB-UniRule"/>
</dbReference>
<dbReference type="GO" id="GO:0009228">
    <property type="term" value="P:thiamine biosynthetic process"/>
    <property type="evidence" value="ECO:0007669"/>
    <property type="project" value="UniProtKB-KW"/>
</dbReference>
<dbReference type="GO" id="GO:0009229">
    <property type="term" value="P:thiamine diphosphate biosynthetic process"/>
    <property type="evidence" value="ECO:0007669"/>
    <property type="project" value="UniProtKB-UniRule"/>
</dbReference>
<dbReference type="CDD" id="cd00564">
    <property type="entry name" value="TMP_TenI"/>
    <property type="match status" value="1"/>
</dbReference>
<dbReference type="FunFam" id="3.20.20.70:FF:000096">
    <property type="entry name" value="Thiamine-phosphate synthase"/>
    <property type="match status" value="1"/>
</dbReference>
<dbReference type="Gene3D" id="3.20.20.70">
    <property type="entry name" value="Aldolase class I"/>
    <property type="match status" value="1"/>
</dbReference>
<dbReference type="HAMAP" id="MF_00097">
    <property type="entry name" value="TMP_synthase"/>
    <property type="match status" value="1"/>
</dbReference>
<dbReference type="InterPro" id="IPR013785">
    <property type="entry name" value="Aldolase_TIM"/>
</dbReference>
<dbReference type="InterPro" id="IPR036206">
    <property type="entry name" value="ThiamineP_synth_sf"/>
</dbReference>
<dbReference type="InterPro" id="IPR022998">
    <property type="entry name" value="ThiamineP_synth_TenI"/>
</dbReference>
<dbReference type="InterPro" id="IPR034291">
    <property type="entry name" value="TMP_synthase"/>
</dbReference>
<dbReference type="NCBIfam" id="TIGR00693">
    <property type="entry name" value="thiE"/>
    <property type="match status" value="1"/>
</dbReference>
<dbReference type="PANTHER" id="PTHR20857">
    <property type="entry name" value="THIAMINE-PHOSPHATE PYROPHOSPHORYLASE"/>
    <property type="match status" value="1"/>
</dbReference>
<dbReference type="PANTHER" id="PTHR20857:SF15">
    <property type="entry name" value="THIAMINE-PHOSPHATE SYNTHASE"/>
    <property type="match status" value="1"/>
</dbReference>
<dbReference type="Pfam" id="PF02581">
    <property type="entry name" value="TMP-TENI"/>
    <property type="match status" value="1"/>
</dbReference>
<dbReference type="SUPFAM" id="SSF51391">
    <property type="entry name" value="Thiamin phosphate synthase"/>
    <property type="match status" value="1"/>
</dbReference>
<evidence type="ECO:0000255" key="1">
    <source>
        <dbReference type="HAMAP-Rule" id="MF_00097"/>
    </source>
</evidence>
<proteinExistence type="inferred from homology"/>
<reference key="1">
    <citation type="submission" date="2009-01" db="EMBL/GenBank/DDBJ databases">
        <title>Complete sequence of chromosome of Caldicellulosiruptor becscii DSM 6725.</title>
        <authorList>
            <person name="Lucas S."/>
            <person name="Copeland A."/>
            <person name="Lapidus A."/>
            <person name="Glavina del Rio T."/>
            <person name="Tice H."/>
            <person name="Bruce D."/>
            <person name="Goodwin L."/>
            <person name="Pitluck S."/>
            <person name="Sims D."/>
            <person name="Meincke L."/>
            <person name="Brettin T."/>
            <person name="Detter J.C."/>
            <person name="Han C."/>
            <person name="Larimer F."/>
            <person name="Land M."/>
            <person name="Hauser L."/>
            <person name="Kyrpides N."/>
            <person name="Ovchinnikova G."/>
            <person name="Kataeva I."/>
            <person name="Adams M.W.W."/>
        </authorList>
    </citation>
    <scope>NUCLEOTIDE SEQUENCE [LARGE SCALE GENOMIC DNA]</scope>
    <source>
        <strain>ATCC BAA-1888 / DSM 6725 / KCTC 15123 / Z-1320</strain>
    </source>
</reference>
<keyword id="KW-0460">Magnesium</keyword>
<keyword id="KW-0479">Metal-binding</keyword>
<keyword id="KW-0784">Thiamine biosynthesis</keyword>
<keyword id="KW-0808">Transferase</keyword>
<name>THIE_CALBD</name>
<feature type="chain" id="PRO_1000198070" description="Thiamine-phosphate synthase">
    <location>
        <begin position="1"/>
        <end position="219"/>
    </location>
</feature>
<feature type="binding site" evidence="1">
    <location>
        <begin position="45"/>
        <end position="49"/>
    </location>
    <ligand>
        <name>4-amino-2-methyl-5-(diphosphooxymethyl)pyrimidine</name>
        <dbReference type="ChEBI" id="CHEBI:57841"/>
    </ligand>
</feature>
<feature type="binding site" evidence="1">
    <location>
        <position position="77"/>
    </location>
    <ligand>
        <name>4-amino-2-methyl-5-(diphosphooxymethyl)pyrimidine</name>
        <dbReference type="ChEBI" id="CHEBI:57841"/>
    </ligand>
</feature>
<feature type="binding site" evidence="1">
    <location>
        <position position="78"/>
    </location>
    <ligand>
        <name>Mg(2+)</name>
        <dbReference type="ChEBI" id="CHEBI:18420"/>
    </ligand>
</feature>
<feature type="binding site" evidence="1">
    <location>
        <position position="97"/>
    </location>
    <ligand>
        <name>Mg(2+)</name>
        <dbReference type="ChEBI" id="CHEBI:18420"/>
    </ligand>
</feature>
<feature type="binding site" evidence="1">
    <location>
        <position position="116"/>
    </location>
    <ligand>
        <name>4-amino-2-methyl-5-(diphosphooxymethyl)pyrimidine</name>
        <dbReference type="ChEBI" id="CHEBI:57841"/>
    </ligand>
</feature>
<feature type="binding site" evidence="1">
    <location>
        <begin position="142"/>
        <end position="144"/>
    </location>
    <ligand>
        <name>2-[(2R,5Z)-2-carboxy-4-methylthiazol-5(2H)-ylidene]ethyl phosphate</name>
        <dbReference type="ChEBI" id="CHEBI:62899"/>
    </ligand>
</feature>
<feature type="binding site" evidence="1">
    <location>
        <position position="145"/>
    </location>
    <ligand>
        <name>4-amino-2-methyl-5-(diphosphooxymethyl)pyrimidine</name>
        <dbReference type="ChEBI" id="CHEBI:57841"/>
    </ligand>
</feature>
<feature type="binding site" evidence="1">
    <location>
        <position position="173"/>
    </location>
    <ligand>
        <name>2-[(2R,5Z)-2-carboxy-4-methylthiazol-5(2H)-ylidene]ethyl phosphate</name>
        <dbReference type="ChEBI" id="CHEBI:62899"/>
    </ligand>
</feature>
<feature type="binding site" evidence="1">
    <location>
        <begin position="193"/>
        <end position="194"/>
    </location>
    <ligand>
        <name>2-[(2R,5Z)-2-carboxy-4-methylthiazol-5(2H)-ylidene]ethyl phosphate</name>
        <dbReference type="ChEBI" id="CHEBI:62899"/>
    </ligand>
</feature>
<accession>B9MN52</accession>
<sequence length="219" mass="24408">MTKEGKLKLFSTYTIYGMTAEKFSNGRSNIEVVKVMLDSGIKIIQYREKYKSLKEKYKECLEIRKLTEDYEALLIVNDHADLCQMVGADGVHLGQEDLPADEVRKLLGDKFIIGVTTHTKDQVLKAKEDGADYVGLGPVFASFTKDNPHPPIGLEMVKWAAENSPLPFVAIGGIKEHNLKEVLASGARCICAVTEIVGADDIRKKIESLFKILKSFERS</sequence>
<gene>
    <name evidence="1" type="primary">thiE</name>
    <name type="ordered locus">Athe_0372</name>
</gene>
<comment type="function">
    <text evidence="1">Condenses 4-methyl-5-(beta-hydroxyethyl)thiazole monophosphate (THZ-P) and 2-methyl-4-amino-5-hydroxymethyl pyrimidine pyrophosphate (HMP-PP) to form thiamine monophosphate (TMP).</text>
</comment>
<comment type="catalytic activity">
    <reaction evidence="1">
        <text>2-[(2R,5Z)-2-carboxy-4-methylthiazol-5(2H)-ylidene]ethyl phosphate + 4-amino-2-methyl-5-(diphosphooxymethyl)pyrimidine + 2 H(+) = thiamine phosphate + CO2 + diphosphate</text>
        <dbReference type="Rhea" id="RHEA:47844"/>
        <dbReference type="ChEBI" id="CHEBI:15378"/>
        <dbReference type="ChEBI" id="CHEBI:16526"/>
        <dbReference type="ChEBI" id="CHEBI:33019"/>
        <dbReference type="ChEBI" id="CHEBI:37575"/>
        <dbReference type="ChEBI" id="CHEBI:57841"/>
        <dbReference type="ChEBI" id="CHEBI:62899"/>
        <dbReference type="EC" id="2.5.1.3"/>
    </reaction>
</comment>
<comment type="catalytic activity">
    <reaction evidence="1">
        <text>2-(2-carboxy-4-methylthiazol-5-yl)ethyl phosphate + 4-amino-2-methyl-5-(diphosphooxymethyl)pyrimidine + 2 H(+) = thiamine phosphate + CO2 + diphosphate</text>
        <dbReference type="Rhea" id="RHEA:47848"/>
        <dbReference type="ChEBI" id="CHEBI:15378"/>
        <dbReference type="ChEBI" id="CHEBI:16526"/>
        <dbReference type="ChEBI" id="CHEBI:33019"/>
        <dbReference type="ChEBI" id="CHEBI:37575"/>
        <dbReference type="ChEBI" id="CHEBI:57841"/>
        <dbReference type="ChEBI" id="CHEBI:62890"/>
        <dbReference type="EC" id="2.5.1.3"/>
    </reaction>
</comment>
<comment type="catalytic activity">
    <reaction evidence="1">
        <text>4-methyl-5-(2-phosphooxyethyl)-thiazole + 4-amino-2-methyl-5-(diphosphooxymethyl)pyrimidine + H(+) = thiamine phosphate + diphosphate</text>
        <dbReference type="Rhea" id="RHEA:22328"/>
        <dbReference type="ChEBI" id="CHEBI:15378"/>
        <dbReference type="ChEBI" id="CHEBI:33019"/>
        <dbReference type="ChEBI" id="CHEBI:37575"/>
        <dbReference type="ChEBI" id="CHEBI:57841"/>
        <dbReference type="ChEBI" id="CHEBI:58296"/>
        <dbReference type="EC" id="2.5.1.3"/>
    </reaction>
</comment>
<comment type="cofactor">
    <cofactor evidence="1">
        <name>Mg(2+)</name>
        <dbReference type="ChEBI" id="CHEBI:18420"/>
    </cofactor>
    <text evidence="1">Binds 1 Mg(2+) ion per subunit.</text>
</comment>
<comment type="pathway">
    <text evidence="1">Cofactor biosynthesis; thiamine diphosphate biosynthesis; thiamine phosphate from 4-amino-2-methyl-5-diphosphomethylpyrimidine and 4-methyl-5-(2-phosphoethyl)-thiazole: step 1/1.</text>
</comment>
<comment type="similarity">
    <text evidence="1">Belongs to the thiamine-phosphate synthase family.</text>
</comment>
<organism>
    <name type="scientific">Caldicellulosiruptor bescii (strain ATCC BAA-1888 / DSM 6725 / KCTC 15123 / Z-1320)</name>
    <name type="common">Anaerocellum thermophilum</name>
    <dbReference type="NCBI Taxonomy" id="521460"/>
    <lineage>
        <taxon>Bacteria</taxon>
        <taxon>Bacillati</taxon>
        <taxon>Bacillota</taxon>
        <taxon>Bacillota incertae sedis</taxon>
        <taxon>Caldicellulosiruptorales</taxon>
        <taxon>Caldicellulosiruptoraceae</taxon>
        <taxon>Caldicellulosiruptor</taxon>
    </lineage>
</organism>
<protein>
    <recommendedName>
        <fullName evidence="1">Thiamine-phosphate synthase</fullName>
        <shortName evidence="1">TP synthase</shortName>
        <shortName evidence="1">TPS</shortName>
        <ecNumber evidence="1">2.5.1.3</ecNumber>
    </recommendedName>
    <alternativeName>
        <fullName evidence="1">Thiamine-phosphate pyrophosphorylase</fullName>
        <shortName evidence="1">TMP pyrophosphorylase</shortName>
        <shortName evidence="1">TMP-PPase</shortName>
    </alternativeName>
</protein>